<organismHost>
    <name type="scientific">Homo sapiens</name>
    <name type="common">Human</name>
    <dbReference type="NCBI Taxonomy" id="9606"/>
</organismHost>
<organismHost>
    <name type="scientific">Phlebotominae</name>
    <name type="common">sandflies</name>
    <dbReference type="NCBI Taxonomy" id="7198"/>
</organismHost>
<gene>
    <name type="primary">M</name>
</gene>
<evidence type="ECO:0000250" key="1">
    <source>
        <dbReference type="UniProtKB" id="P03519"/>
    </source>
</evidence>
<evidence type="ECO:0000250" key="2">
    <source>
        <dbReference type="UniProtKB" id="P08325"/>
    </source>
</evidence>
<evidence type="ECO:0000269" key="3">
    <source>
    </source>
</evidence>
<evidence type="ECO:0000305" key="4"/>
<proteinExistence type="evidence at protein level"/>
<comment type="function">
    <text evidence="1">Forms a double layer around the helical nucleocapsid, the inner matrix layer binding to the N helix and the outer matrix layer binding to the envelope glycoprotein. Plays a major role in assembly and budding of virion, by recruiting cellular partners of the ESCRT complexes that play a key role in releasing the budding particle from the host membrane. Condensates the ribonucleocapsid core during virus assembly. Inhibits the host mRNA nuclear export thereby inducing the shut off of cellular transcription and preventing the interferon signaling and the establishment of antiviral state in infected cells. This shutoff presumably inhibits interferon signaling and thus establishment of antiviral state in virus infected cells. Induces cell-rounding, cytoskeleton disorganization and apoptosis in infected cell. Inhibits host transcription, possibly through interaction with host DNA repair factor IIH/TFIIH GTF2H5 subunit.</text>
</comment>
<comment type="subunit">
    <text evidence="1 2 3">Homomultimer. Interacts with viral nucleocapsid; this interaction contributes to the virion assembly (By similarity). Interacts with the viral envelope glycoprotein; this interaction contributes to the virion assembly (By similarity). Interacts with host RAE1-NUP98 complex. Interacts with host NEDD4 and TSG101. Interacts with host dynamin. Interacts with host NDUFAF4; the interaction inhibits viral propagation and is independent of interferon activation. Interacts with host GTF2H5; the interaction may inhibit host transcription (By similarity). Interacts with host DRG1 (PubMed:25944354). Interaction with host CTDNEP1 (PubMed:25944354). Interaction with host ABCE1 (PubMed:25944354).</text>
</comment>
<comment type="interaction">
    <interactant intactId="EBI-10823897">
        <id>Q9WH76</id>
    </interactant>
    <interactant intactId="EBI-2510446">
        <id>P61221</id>
        <label>ABCE1</label>
    </interactant>
    <organismsDiffer>true</organismsDiffer>
    <experiments>3</experiments>
</comment>
<comment type="interaction">
    <interactant intactId="EBI-10823897">
        <id>Q9WH76</id>
    </interactant>
    <interactant intactId="EBI-5323433">
        <id>O95476</id>
        <label>CTDNEP1</label>
    </interactant>
    <organismsDiffer>true</organismsDiffer>
    <experiments>3</experiments>
</comment>
<comment type="interaction">
    <interactant intactId="EBI-10823897">
        <id>Q9WH76</id>
    </interactant>
    <interactant intactId="EBI-719554">
        <id>Q9Y295</id>
        <label>DRG1</label>
    </interactant>
    <organismsDiffer>true</organismsDiffer>
    <experiments>3</experiments>
</comment>
<comment type="subcellular location">
    <subcellularLocation>
        <location evidence="1">Virion</location>
    </subcellularLocation>
    <subcellularLocation>
        <location evidence="1">Host endomembrane system</location>
        <topology evidence="1">Peripheral membrane protein</topology>
    </subcellularLocation>
    <subcellularLocation>
        <location evidence="1">Host nucleus membrane</location>
        <topology evidence="1">Peripheral membrane protein</topology>
    </subcellularLocation>
    <subcellularLocation>
        <location evidence="1">Host nucleus</location>
    </subcellularLocation>
    <subcellularLocation>
        <location evidence="1">Host cytoplasm</location>
    </subcellularLocation>
    <text evidence="1">In the virion, forms a double layer around the helical nucleocapsid, the inner matrix layer binding to the N helix and the outer matrix layer binding to the envelope glycoprotein. About 2480 copies of M are present in the virion.</text>
</comment>
<comment type="domain">
    <text evidence="1">Late-budding domains (L domains) are short sequence motifs essential for viral particle budding. They recruit proteins of the host ESCRT machinery (Endosomal Sorting Complex Required for Transport) or ESCRT-associated proteins. M contains two overlapping L domains: a PPXY motif which interacts with the WW domain 3 of NEDD4 and a PTAP/PSAP motif, which interacts with the UEV domain of TSG101.</text>
</comment>
<comment type="PTM">
    <text evidence="1">Phosphorylated by host.</text>
</comment>
<comment type="similarity">
    <text evidence="4">Belongs to the vesiculoviruses matrix protein family.</text>
</comment>
<name>MATRX_CHAV</name>
<feature type="chain" id="PRO_0000287254" description="Matrix protein">
    <location>
        <begin position="1"/>
        <end position="229"/>
    </location>
</feature>
<feature type="short sequence motif" description="dynamin binding" evidence="1">
    <location>
        <begin position="2"/>
        <end position="4"/>
    </location>
</feature>
<feature type="short sequence motif" description="PPXY motif" evidence="1">
    <location>
        <begin position="30"/>
        <end position="33"/>
    </location>
</feature>
<feature type="short sequence motif" description="PTAP/PSAP motif" evidence="1">
    <location>
        <begin position="42"/>
        <end position="45"/>
    </location>
</feature>
<sequence>MQRLKKFIAKREKGDKGKMKWNSSMDYDSPPSYQDVRRGIFPTAPLFGMEDDMMEFTPSLGIQTLKLQYKCVVNINAINPFRDFREAISAMQFWEADYSGYIGKKPFYRAIILHTARQLKTSNPGILDRGVVEYHATTQGRALVFHSLGPSPSMMFVPETFTREWNILTNKGTINVKIWLGETDTLSELEPILNPVNFRDDREMIEGAAIMGLEIKKQKDNTWLISKSH</sequence>
<protein>
    <recommendedName>
        <fullName>Matrix protein</fullName>
    </recommendedName>
</protein>
<accession>Q9WH76</accession>
<keyword id="KW-0053">Apoptosis</keyword>
<keyword id="KW-1035">Host cytoplasm</keyword>
<keyword id="KW-1043">Host membrane</keyword>
<keyword id="KW-1048">Host nucleus</keyword>
<keyword id="KW-0945">Host-virus interaction</keyword>
<keyword id="KW-0472">Membrane</keyword>
<keyword id="KW-0597">Phosphoprotein</keyword>
<keyword id="KW-1185">Reference proteome</keyword>
<keyword id="KW-1198">Viral budding</keyword>
<keyword id="KW-1187">Viral budding via the host ESCRT complexes</keyword>
<keyword id="KW-0468">Viral matrix protein</keyword>
<keyword id="KW-1188">Viral release from host cell</keyword>
<keyword id="KW-0946">Virion</keyword>
<reference key="1">
    <citation type="journal article" date="1999" name="Virus Genes">
        <title>Matrix protein of Chandipura virus inhibits transcription from an RNA polymerase II promoter.</title>
        <authorList>
            <person name="Taylor A."/>
            <person name="Easton A.J."/>
            <person name="Marriott A.C."/>
        </authorList>
    </citation>
    <scope>NUCLEOTIDE SEQUENCE [GENOMIC RNA]</scope>
</reference>
<reference key="2">
    <citation type="journal article" date="2015" name="Acta Trop.">
        <title>Host interactions of Chandipura virus matrix protein.</title>
        <authorList>
            <person name="Rajasekharan S."/>
            <person name="Kumar K."/>
            <person name="Rana J."/>
            <person name="Gupta A."/>
            <person name="Chaudhary V.K."/>
            <person name="Gupta S."/>
        </authorList>
    </citation>
    <scope>INTERACTION WITH HOST CTDNEP1</scope>
    <scope>INTERACTION WITH HOST DRG1</scope>
    <scope>INTERACTION WITH HOST ABCE1</scope>
</reference>
<dbReference type="EMBL" id="AF128868">
    <property type="protein sequence ID" value="AAD25086.1"/>
    <property type="molecule type" value="Genomic_RNA"/>
</dbReference>
<dbReference type="RefSeq" id="YP_007641379.1">
    <property type="nucleotide sequence ID" value="NC_020805.1"/>
</dbReference>
<dbReference type="SMR" id="Q9WH76"/>
<dbReference type="IntAct" id="Q9WH76">
    <property type="interactions" value="8"/>
</dbReference>
<dbReference type="MINT" id="Q9WH76"/>
<dbReference type="KEGG" id="vg:14857909"/>
<dbReference type="Proteomes" id="UP000008448">
    <property type="component" value="Genome"/>
</dbReference>
<dbReference type="GO" id="GO:0030430">
    <property type="term" value="C:host cell cytoplasm"/>
    <property type="evidence" value="ECO:0007669"/>
    <property type="project" value="UniProtKB-SubCell"/>
</dbReference>
<dbReference type="GO" id="GO:0044200">
    <property type="term" value="C:host cell nuclear membrane"/>
    <property type="evidence" value="ECO:0007669"/>
    <property type="project" value="UniProtKB-SubCell"/>
</dbReference>
<dbReference type="GO" id="GO:0016020">
    <property type="term" value="C:membrane"/>
    <property type="evidence" value="ECO:0007669"/>
    <property type="project" value="UniProtKB-KW"/>
</dbReference>
<dbReference type="GO" id="GO:0019031">
    <property type="term" value="C:viral envelope"/>
    <property type="evidence" value="ECO:0007669"/>
    <property type="project" value="InterPro"/>
</dbReference>
<dbReference type="GO" id="GO:0039660">
    <property type="term" value="F:structural constituent of virion"/>
    <property type="evidence" value="ECO:0007669"/>
    <property type="project" value="UniProtKB-KW"/>
</dbReference>
<dbReference type="GO" id="GO:0039702">
    <property type="term" value="P:viral budding via host ESCRT complex"/>
    <property type="evidence" value="ECO:0007669"/>
    <property type="project" value="UniProtKB-KW"/>
</dbReference>
<dbReference type="Gene3D" id="3.10.460.10">
    <property type="entry name" value="VSV matrix protein"/>
    <property type="match status" value="1"/>
</dbReference>
<dbReference type="InterPro" id="IPR009397">
    <property type="entry name" value="Vesiculo_matrix"/>
</dbReference>
<dbReference type="InterPro" id="IPR036711">
    <property type="entry name" value="VSV_matrix_sf"/>
</dbReference>
<dbReference type="Pfam" id="PF06326">
    <property type="entry name" value="Vesiculo_matrix"/>
    <property type="match status" value="1"/>
</dbReference>
<dbReference type="SUPFAM" id="SSF75404">
    <property type="entry name" value="VSV matrix protein"/>
    <property type="match status" value="1"/>
</dbReference>
<organism>
    <name type="scientific">Chandipura virus (strain I653514)</name>
    <name type="common">CHPV</name>
    <dbReference type="NCBI Taxonomy" id="11273"/>
    <lineage>
        <taxon>Viruses</taxon>
        <taxon>Riboviria</taxon>
        <taxon>Orthornavirae</taxon>
        <taxon>Negarnaviricota</taxon>
        <taxon>Haploviricotina</taxon>
        <taxon>Monjiviricetes</taxon>
        <taxon>Mononegavirales</taxon>
        <taxon>Rhabdoviridae</taxon>
        <taxon>Alpharhabdovirinae</taxon>
        <taxon>Vesiculovirus</taxon>
        <taxon>Vesiculovirus chandipura</taxon>
    </lineage>
</organism>